<reference key="1">
    <citation type="journal article" date="2010" name="PLoS ONE">
        <title>The complete multipartite genome sequence of Cupriavidus necator JMP134, a versatile pollutant degrader.</title>
        <authorList>
            <person name="Lykidis A."/>
            <person name="Perez-Pantoja D."/>
            <person name="Ledger T."/>
            <person name="Mavromatis K."/>
            <person name="Anderson I.J."/>
            <person name="Ivanova N.N."/>
            <person name="Hooper S.D."/>
            <person name="Lapidus A."/>
            <person name="Lucas S."/>
            <person name="Gonzalez B."/>
            <person name="Kyrpides N.C."/>
        </authorList>
    </citation>
    <scope>NUCLEOTIDE SEQUENCE [LARGE SCALE GENOMIC DNA]</scope>
    <source>
        <strain>JMP134 / LMG 1197</strain>
    </source>
</reference>
<feature type="chain" id="PRO_0000266377" description="Guanylate kinase">
    <location>
        <begin position="1"/>
        <end position="216"/>
    </location>
</feature>
<feature type="domain" description="Guanylate kinase-like" evidence="1">
    <location>
        <begin position="15"/>
        <end position="193"/>
    </location>
</feature>
<feature type="binding site" evidence="1">
    <location>
        <begin position="22"/>
        <end position="29"/>
    </location>
    <ligand>
        <name>ATP</name>
        <dbReference type="ChEBI" id="CHEBI:30616"/>
    </ligand>
</feature>
<protein>
    <recommendedName>
        <fullName evidence="1">Guanylate kinase</fullName>
        <ecNumber evidence="1">2.7.4.8</ecNumber>
    </recommendedName>
    <alternativeName>
        <fullName evidence="1">GMP kinase</fullName>
    </alternativeName>
</protein>
<evidence type="ECO:0000255" key="1">
    <source>
        <dbReference type="HAMAP-Rule" id="MF_00328"/>
    </source>
</evidence>
<keyword id="KW-0067">ATP-binding</keyword>
<keyword id="KW-0963">Cytoplasm</keyword>
<keyword id="KW-0418">Kinase</keyword>
<keyword id="KW-0547">Nucleotide-binding</keyword>
<keyword id="KW-0808">Transferase</keyword>
<sequence>MSDTPHTAIDTVYPGNLFMVVAPSGAGKSTLVNALLAQDAAIRLSISHTTRAPRPGEQDGREYHFCTVDSFRAARDRGEFLEWAEVHGNYYATSRVWIEEQMAQGNDVLLEIDWQGAQQVHQRFSNAVEIFILPPSLTALEDRLKKRGQDEPNVIVRRLLAAGSEMSHASESDYVIINEVFDNALEELRNVVRATRLRFSSQKARHTELFIELGIH</sequence>
<name>KGUA_CUPPJ</name>
<comment type="function">
    <text evidence="1">Essential for recycling GMP and indirectly, cGMP.</text>
</comment>
<comment type="catalytic activity">
    <reaction evidence="1">
        <text>GMP + ATP = GDP + ADP</text>
        <dbReference type="Rhea" id="RHEA:20780"/>
        <dbReference type="ChEBI" id="CHEBI:30616"/>
        <dbReference type="ChEBI" id="CHEBI:58115"/>
        <dbReference type="ChEBI" id="CHEBI:58189"/>
        <dbReference type="ChEBI" id="CHEBI:456216"/>
        <dbReference type="EC" id="2.7.4.8"/>
    </reaction>
</comment>
<comment type="subcellular location">
    <subcellularLocation>
        <location evidence="1">Cytoplasm</location>
    </subcellularLocation>
</comment>
<comment type="similarity">
    <text evidence="1">Belongs to the guanylate kinase family.</text>
</comment>
<dbReference type="EC" id="2.7.4.8" evidence="1"/>
<dbReference type="EMBL" id="CP000090">
    <property type="protein sequence ID" value="AAZ61835.1"/>
    <property type="molecule type" value="Genomic_DNA"/>
</dbReference>
<dbReference type="SMR" id="Q46YE8"/>
<dbReference type="STRING" id="264198.Reut_A2473"/>
<dbReference type="KEGG" id="reu:Reut_A2473"/>
<dbReference type="eggNOG" id="COG0194">
    <property type="taxonomic scope" value="Bacteria"/>
</dbReference>
<dbReference type="HOGENOM" id="CLU_001715_1_0_4"/>
<dbReference type="OrthoDB" id="9808150at2"/>
<dbReference type="GO" id="GO:0005829">
    <property type="term" value="C:cytosol"/>
    <property type="evidence" value="ECO:0007669"/>
    <property type="project" value="TreeGrafter"/>
</dbReference>
<dbReference type="GO" id="GO:0005524">
    <property type="term" value="F:ATP binding"/>
    <property type="evidence" value="ECO:0007669"/>
    <property type="project" value="UniProtKB-UniRule"/>
</dbReference>
<dbReference type="GO" id="GO:0004385">
    <property type="term" value="F:guanylate kinase activity"/>
    <property type="evidence" value="ECO:0007669"/>
    <property type="project" value="UniProtKB-UniRule"/>
</dbReference>
<dbReference type="CDD" id="cd00071">
    <property type="entry name" value="GMPK"/>
    <property type="match status" value="1"/>
</dbReference>
<dbReference type="FunFam" id="3.30.63.10:FF:000002">
    <property type="entry name" value="Guanylate kinase 1"/>
    <property type="match status" value="1"/>
</dbReference>
<dbReference type="Gene3D" id="3.30.63.10">
    <property type="entry name" value="Guanylate Kinase phosphate binding domain"/>
    <property type="match status" value="1"/>
</dbReference>
<dbReference type="Gene3D" id="3.40.50.300">
    <property type="entry name" value="P-loop containing nucleotide triphosphate hydrolases"/>
    <property type="match status" value="1"/>
</dbReference>
<dbReference type="HAMAP" id="MF_00328">
    <property type="entry name" value="Guanylate_kinase"/>
    <property type="match status" value="1"/>
</dbReference>
<dbReference type="InterPro" id="IPR008145">
    <property type="entry name" value="GK/Ca_channel_bsu"/>
</dbReference>
<dbReference type="InterPro" id="IPR008144">
    <property type="entry name" value="Guanylate_kin-like_dom"/>
</dbReference>
<dbReference type="InterPro" id="IPR017665">
    <property type="entry name" value="Guanylate_kinase"/>
</dbReference>
<dbReference type="InterPro" id="IPR027417">
    <property type="entry name" value="P-loop_NTPase"/>
</dbReference>
<dbReference type="NCBIfam" id="TIGR03263">
    <property type="entry name" value="guanyl_kin"/>
    <property type="match status" value="1"/>
</dbReference>
<dbReference type="PANTHER" id="PTHR23117:SF13">
    <property type="entry name" value="GUANYLATE KINASE"/>
    <property type="match status" value="1"/>
</dbReference>
<dbReference type="PANTHER" id="PTHR23117">
    <property type="entry name" value="GUANYLATE KINASE-RELATED"/>
    <property type="match status" value="1"/>
</dbReference>
<dbReference type="Pfam" id="PF00625">
    <property type="entry name" value="Guanylate_kin"/>
    <property type="match status" value="1"/>
</dbReference>
<dbReference type="SMART" id="SM00072">
    <property type="entry name" value="GuKc"/>
    <property type="match status" value="1"/>
</dbReference>
<dbReference type="SUPFAM" id="SSF52540">
    <property type="entry name" value="P-loop containing nucleoside triphosphate hydrolases"/>
    <property type="match status" value="1"/>
</dbReference>
<dbReference type="PROSITE" id="PS50052">
    <property type="entry name" value="GUANYLATE_KINASE_2"/>
    <property type="match status" value="1"/>
</dbReference>
<proteinExistence type="inferred from homology"/>
<organism>
    <name type="scientific">Cupriavidus pinatubonensis (strain JMP 134 / LMG 1197)</name>
    <name type="common">Cupriavidus necator (strain JMP 134)</name>
    <dbReference type="NCBI Taxonomy" id="264198"/>
    <lineage>
        <taxon>Bacteria</taxon>
        <taxon>Pseudomonadati</taxon>
        <taxon>Pseudomonadota</taxon>
        <taxon>Betaproteobacteria</taxon>
        <taxon>Burkholderiales</taxon>
        <taxon>Burkholderiaceae</taxon>
        <taxon>Cupriavidus</taxon>
    </lineage>
</organism>
<accession>Q46YE8</accession>
<gene>
    <name evidence="1" type="primary">gmk</name>
    <name type="ordered locus">Reut_A2473</name>
</gene>